<organism>
    <name type="scientific">Influenza A virus (strain A/Memphis/2/1978 H3N2)</name>
    <dbReference type="NCBI Taxonomy" id="383580"/>
    <lineage>
        <taxon>Viruses</taxon>
        <taxon>Riboviria</taxon>
        <taxon>Orthornavirae</taxon>
        <taxon>Negarnaviricota</taxon>
        <taxon>Polyploviricotina</taxon>
        <taxon>Insthoviricetes</taxon>
        <taxon>Articulavirales</taxon>
        <taxon>Orthomyxoviridae</taxon>
        <taxon>Alphainfluenzavirus</taxon>
        <taxon>Alphainfluenzavirus influenzae</taxon>
        <taxon>Influenza A virus</taxon>
    </lineage>
</organism>
<proteinExistence type="inferred from homology"/>
<reference key="1">
    <citation type="submission" date="2005-12" db="EMBL/GenBank/DDBJ databases">
        <title>The NIAID influenza genome sequencing project.</title>
        <authorList>
            <person name="Ghedin E."/>
            <person name="Spiro D."/>
            <person name="Miller N."/>
            <person name="Zaborsky J."/>
            <person name="Feldblyum T."/>
            <person name="Subbu V."/>
            <person name="Shumway M."/>
            <person name="Sparenborg J."/>
            <person name="Groveman L."/>
            <person name="Halpin R."/>
            <person name="Sitz J."/>
            <person name="Koo H."/>
            <person name="Salzberg S.L."/>
            <person name="Webster R.G."/>
            <person name="Hoffmann E."/>
            <person name="Krauss S."/>
            <person name="Naeve C."/>
            <person name="Bao Y."/>
            <person name="Bolotov P."/>
            <person name="Dernovoy D."/>
            <person name="Kiryutin B."/>
            <person name="Lipman D.J."/>
            <person name="Tatusova T."/>
        </authorList>
    </citation>
    <scope>NUCLEOTIDE SEQUENCE [GENOMIC RNA]</scope>
</reference>
<organismHost>
    <name type="scientific">Aves</name>
    <dbReference type="NCBI Taxonomy" id="8782"/>
</organismHost>
<organismHost>
    <name type="scientific">Cetacea</name>
    <name type="common">whales</name>
    <dbReference type="NCBI Taxonomy" id="9721"/>
</organismHost>
<organismHost>
    <name type="scientific">Homo sapiens</name>
    <name type="common">Human</name>
    <dbReference type="NCBI Taxonomy" id="9606"/>
</organismHost>
<organismHost>
    <name type="scientific">Phocidae</name>
    <name type="common">true seals</name>
    <dbReference type="NCBI Taxonomy" id="9709"/>
</organismHost>
<organismHost>
    <name type="scientific">Sus scrofa</name>
    <name type="common">Pig</name>
    <dbReference type="NCBI Taxonomy" id="9823"/>
</organismHost>
<comment type="function">
    <text evidence="1">Forms a proton-selective ion channel that is necessary for the efficient release of the viral genome during virus entry. After attaching to the cell surface, the virion enters the cell by endocytosis. Acidification of the endosome triggers M2 ion channel activity. The influx of protons into virion interior is believed to disrupt interactions between the viral ribonucleoprotein (RNP), matrix protein 1 (M1), and lipid bilayers, thereby freeing the viral genome from interaction with viral proteins and enabling RNA segments to migrate to the host cell nucleus, where influenza virus RNA transcription and replication occur. Also plays a role in viral proteins secretory pathway. Elevates the intravesicular pH of normally acidic compartments, such as trans-Golgi network, preventing newly formed hemagglutinin from premature switching to the fusion-active conformation.</text>
</comment>
<comment type="activity regulation">
    <text>The M2 protein from most influenza A strains is inhibited by amantadine and rimantadine, resulting in viral uncoating incapacity. Emergence of amantadine-resistant variants is usually rapid.</text>
</comment>
<comment type="subunit">
    <text evidence="1">Homotetramer; composed of two disulfide-linked dimers held together by non-covalent interactions. May interact with matrix protein 1.</text>
</comment>
<comment type="subcellular location">
    <subcellularLocation>
        <location evidence="1">Virion membrane</location>
    </subcellularLocation>
    <subcellularLocation>
        <location evidence="1">Host apical cell membrane</location>
        <topology evidence="1">Single-pass type III membrane protein</topology>
    </subcellularLocation>
    <text evidence="1">Abundantly expressed at the apical plasma membrane in infected polarized epithelial cells, in close proximity to budding and assembled virions. Minor component of virions (only 16-20 molecules/virion).</text>
</comment>
<comment type="alternative products">
    <event type="alternative splicing"/>
    <isoform>
        <id>Q2PIM5-1</id>
        <name>M2</name>
        <sequence type="displayed"/>
    </isoform>
    <isoform>
        <id>Q2PIM4-1</id>
        <name>M1</name>
        <sequence type="external"/>
    </isoform>
    <text>Only the first 9 residues are shared by the 2 isoforms.</text>
</comment>
<comment type="domain">
    <text evidence="1">Cytoplasmic tail plays an important role in virion assembly and morphogenesis.</text>
</comment>
<comment type="miscellaneous">
    <text evidence="1">When the channel is activated, one or more imidazole moieties of His-37 probably become bi-protonated.</text>
</comment>
<comment type="similarity">
    <text evidence="1">Belongs to the influenza viruses matrix protein M2 family.</text>
</comment>
<keyword id="KW-0025">Alternative splicing</keyword>
<keyword id="KW-1015">Disulfide bond</keyword>
<keyword id="KW-0325">Glycoprotein</keyword>
<keyword id="KW-1032">Host cell membrane</keyword>
<keyword id="KW-1043">Host membrane</keyword>
<keyword id="KW-0945">Host-virus interaction</keyword>
<keyword id="KW-0375">Hydrogen ion transport</keyword>
<keyword id="KW-1083">Inhibition of host autophagy by virus</keyword>
<keyword id="KW-0407">Ion channel</keyword>
<keyword id="KW-0406">Ion transport</keyword>
<keyword id="KW-0449">Lipoprotein</keyword>
<keyword id="KW-0472">Membrane</keyword>
<keyword id="KW-0564">Palmitate</keyword>
<keyword id="KW-0597">Phosphoprotein</keyword>
<keyword id="KW-0735">Signal-anchor</keyword>
<keyword id="KW-0812">Transmembrane</keyword>
<keyword id="KW-1133">Transmembrane helix</keyword>
<keyword id="KW-0813">Transport</keyword>
<keyword id="KW-1182">Viral ion channel</keyword>
<keyword id="KW-0946">Virion</keyword>
<sequence length="97" mass="11213">MSLLTEVETPIRNEWGCRCNDSSDPLVVAASIIGILHLILWILDRLFFKCIYRFFEHGLKRGPSTEGVPESMREEYRKEQQNAVDADDSHFVSIELE</sequence>
<accession>Q2PIM5</accession>
<evidence type="ECO:0000255" key="1">
    <source>
        <dbReference type="HAMAP-Rule" id="MF_04069"/>
    </source>
</evidence>
<evidence type="ECO:0000256" key="2">
    <source>
        <dbReference type="SAM" id="MobiDB-lite"/>
    </source>
</evidence>
<feature type="chain" id="PRO_0000326362" description="Matrix protein 2">
    <location>
        <begin position="1"/>
        <end position="97"/>
    </location>
</feature>
<feature type="topological domain" description="Virion surface" evidence="1">
    <location>
        <begin position="1"/>
        <end position="22"/>
    </location>
</feature>
<feature type="transmembrane region" description="Helical; Signal-anchor for type III membrane protein" evidence="1">
    <location>
        <begin position="23"/>
        <end position="43"/>
    </location>
</feature>
<feature type="topological domain" description="Intravirion" evidence="1">
    <location>
        <begin position="44"/>
        <end position="97"/>
    </location>
</feature>
<feature type="region of interest" description="Disordered" evidence="2">
    <location>
        <begin position="60"/>
        <end position="88"/>
    </location>
</feature>
<feature type="compositionally biased region" description="Basic and acidic residues" evidence="2">
    <location>
        <begin position="71"/>
        <end position="80"/>
    </location>
</feature>
<feature type="site" description="Essential for channel activity, possibly by being protonated during channel activation, and by forming the channel gate and the selective filter" evidence="1">
    <location>
        <position position="37"/>
    </location>
</feature>
<feature type="site" description="Seems to be involved in pH gating" evidence="1">
    <location>
        <position position="41"/>
    </location>
</feature>
<feature type="modified residue" description="Phosphoserine; by host" evidence="1">
    <location>
        <position position="64"/>
    </location>
</feature>
<feature type="modified residue" description="Phosphoserine; by host" evidence="1">
    <location>
        <position position="93"/>
    </location>
</feature>
<feature type="lipid moiety-binding region" description="S-palmitoyl cysteine; by host" evidence="1">
    <location>
        <position position="50"/>
    </location>
</feature>
<feature type="glycosylation site" description="N-linked (GlcNAc...) asparagine; by host" evidence="1">
    <location>
        <position position="20"/>
    </location>
</feature>
<feature type="disulfide bond" description="Interchain (with C-17)" evidence="1">
    <location>
        <position position="17"/>
    </location>
</feature>
<feature type="disulfide bond" description="Interchain (with C-19)" evidence="1">
    <location>
        <position position="19"/>
    </location>
</feature>
<protein>
    <recommendedName>
        <fullName evidence="1">Matrix protein 2</fullName>
    </recommendedName>
    <alternativeName>
        <fullName evidence="1">Proton channel protein M2</fullName>
    </alternativeName>
</protein>
<dbReference type="EMBL" id="CY006692">
    <property type="protein sequence ID" value="ABB96321.1"/>
    <property type="molecule type" value="Genomic_RNA"/>
</dbReference>
<dbReference type="SMR" id="Q2PIM5"/>
<dbReference type="GlyCosmos" id="Q2PIM5">
    <property type="glycosylation" value="1 site, No reported glycans"/>
</dbReference>
<dbReference type="Proteomes" id="UP000007555">
    <property type="component" value="Genome"/>
</dbReference>
<dbReference type="GO" id="GO:0020002">
    <property type="term" value="C:host cell plasma membrane"/>
    <property type="evidence" value="ECO:0007669"/>
    <property type="project" value="UniProtKB-SubCell"/>
</dbReference>
<dbReference type="GO" id="GO:0016020">
    <property type="term" value="C:membrane"/>
    <property type="evidence" value="ECO:0007669"/>
    <property type="project" value="UniProtKB-UniRule"/>
</dbReference>
<dbReference type="GO" id="GO:0055036">
    <property type="term" value="C:virion membrane"/>
    <property type="evidence" value="ECO:0007669"/>
    <property type="project" value="UniProtKB-SubCell"/>
</dbReference>
<dbReference type="GO" id="GO:0005216">
    <property type="term" value="F:monoatomic ion channel activity"/>
    <property type="evidence" value="ECO:0007669"/>
    <property type="project" value="UniProtKB-UniRule"/>
</dbReference>
<dbReference type="GO" id="GO:0015078">
    <property type="term" value="F:proton transmembrane transporter activity"/>
    <property type="evidence" value="ECO:0007669"/>
    <property type="project" value="UniProtKB-UniRule"/>
</dbReference>
<dbReference type="GO" id="GO:0051259">
    <property type="term" value="P:protein complex oligomerization"/>
    <property type="evidence" value="ECO:0007669"/>
    <property type="project" value="UniProtKB-UniRule"/>
</dbReference>
<dbReference type="GO" id="GO:0044694">
    <property type="term" value="P:symbiont genome entry into host cell via pore formation in plasma membrane"/>
    <property type="evidence" value="ECO:0007669"/>
    <property type="project" value="UniProtKB-UniRule"/>
</dbReference>
<dbReference type="GO" id="GO:0140321">
    <property type="term" value="P:symbiont-mediated suppression of host autophagy"/>
    <property type="evidence" value="ECO:0007669"/>
    <property type="project" value="UniProtKB-KW"/>
</dbReference>
<dbReference type="Gene3D" id="6.10.250.1640">
    <property type="match status" value="1"/>
</dbReference>
<dbReference type="HAMAP" id="MF_04069">
    <property type="entry name" value="INFV_M2"/>
    <property type="match status" value="1"/>
</dbReference>
<dbReference type="InterPro" id="IPR002089">
    <property type="entry name" value="Flu_M2"/>
</dbReference>
<dbReference type="Pfam" id="PF00599">
    <property type="entry name" value="Flu_M2"/>
    <property type="match status" value="1"/>
</dbReference>
<gene>
    <name evidence="1" type="primary">M</name>
</gene>
<name>M2_I78A7</name>